<protein>
    <recommendedName>
        <fullName evidence="1">Lysine--tRNA ligase</fullName>
        <ecNumber evidence="1">6.1.1.6</ecNumber>
    </recommendedName>
    <alternativeName>
        <fullName evidence="1">Lysyl-tRNA synthetase</fullName>
        <shortName evidence="1">LysRS</shortName>
    </alternativeName>
</protein>
<feature type="chain" id="PRO_1000040353" description="Lysine--tRNA ligase">
    <location>
        <begin position="1"/>
        <end position="522"/>
    </location>
</feature>
<feature type="short sequence motif" description="'HIGH' region">
    <location>
        <begin position="44"/>
        <end position="52"/>
    </location>
</feature>
<feature type="short sequence motif" description="'KMSKS' region">
    <location>
        <begin position="290"/>
        <end position="294"/>
    </location>
</feature>
<feature type="binding site" evidence="1">
    <location>
        <position position="293"/>
    </location>
    <ligand>
        <name>ATP</name>
        <dbReference type="ChEBI" id="CHEBI:30616"/>
    </ligand>
</feature>
<gene>
    <name evidence="1" type="primary">lysS</name>
    <name type="ordered locus">A1G_02865</name>
</gene>
<accession>A8GRT7</accession>
<name>SYK_RICRS</name>
<evidence type="ECO:0000255" key="1">
    <source>
        <dbReference type="HAMAP-Rule" id="MF_00177"/>
    </source>
</evidence>
<keyword id="KW-0030">Aminoacyl-tRNA synthetase</keyword>
<keyword id="KW-0067">ATP-binding</keyword>
<keyword id="KW-0963">Cytoplasm</keyword>
<keyword id="KW-0436">Ligase</keyword>
<keyword id="KW-0547">Nucleotide-binding</keyword>
<keyword id="KW-0648">Protein biosynthesis</keyword>
<proteinExistence type="inferred from homology"/>
<reference key="1">
    <citation type="submission" date="2007-09" db="EMBL/GenBank/DDBJ databases">
        <title>Complete genome sequence of Rickettsia rickettsii.</title>
        <authorList>
            <person name="Madan A."/>
            <person name="Fahey J."/>
            <person name="Helton E."/>
            <person name="Ketteman M."/>
            <person name="Madan A."/>
            <person name="Rodrigues S."/>
            <person name="Sanchez A."/>
            <person name="Dasch G."/>
            <person name="Eremeeva M."/>
        </authorList>
    </citation>
    <scope>NUCLEOTIDE SEQUENCE [LARGE SCALE GENOMIC DNA]</scope>
    <source>
        <strain>Sheila Smith</strain>
    </source>
</reference>
<comment type="catalytic activity">
    <reaction evidence="1">
        <text>tRNA(Lys) + L-lysine + ATP = L-lysyl-tRNA(Lys) + AMP + diphosphate</text>
        <dbReference type="Rhea" id="RHEA:20792"/>
        <dbReference type="Rhea" id="RHEA-COMP:9696"/>
        <dbReference type="Rhea" id="RHEA-COMP:9697"/>
        <dbReference type="ChEBI" id="CHEBI:30616"/>
        <dbReference type="ChEBI" id="CHEBI:32551"/>
        <dbReference type="ChEBI" id="CHEBI:33019"/>
        <dbReference type="ChEBI" id="CHEBI:78442"/>
        <dbReference type="ChEBI" id="CHEBI:78529"/>
        <dbReference type="ChEBI" id="CHEBI:456215"/>
        <dbReference type="EC" id="6.1.1.6"/>
    </reaction>
</comment>
<comment type="subcellular location">
    <subcellularLocation>
        <location evidence="1">Cytoplasm</location>
    </subcellularLocation>
</comment>
<comment type="similarity">
    <text evidence="1">Belongs to the class-I aminoacyl-tRNA synthetase family.</text>
</comment>
<organism>
    <name type="scientific">Rickettsia rickettsii (strain Sheila Smith)</name>
    <dbReference type="NCBI Taxonomy" id="392021"/>
    <lineage>
        <taxon>Bacteria</taxon>
        <taxon>Pseudomonadati</taxon>
        <taxon>Pseudomonadota</taxon>
        <taxon>Alphaproteobacteria</taxon>
        <taxon>Rickettsiales</taxon>
        <taxon>Rickettsiaceae</taxon>
        <taxon>Rickettsieae</taxon>
        <taxon>Rickettsia</taxon>
        <taxon>spotted fever group</taxon>
    </lineage>
</organism>
<dbReference type="EC" id="6.1.1.6" evidence="1"/>
<dbReference type="EMBL" id="CP000848">
    <property type="protein sequence ID" value="ABV76112.1"/>
    <property type="molecule type" value="Genomic_DNA"/>
</dbReference>
<dbReference type="RefSeq" id="WP_012150703.1">
    <property type="nucleotide sequence ID" value="NZ_CP121767.1"/>
</dbReference>
<dbReference type="SMR" id="A8GRT7"/>
<dbReference type="GeneID" id="79937260"/>
<dbReference type="KEGG" id="rri:A1G_02865"/>
<dbReference type="HOGENOM" id="CLU_025562_2_0_5"/>
<dbReference type="Proteomes" id="UP000006832">
    <property type="component" value="Chromosome"/>
</dbReference>
<dbReference type="GO" id="GO:0005737">
    <property type="term" value="C:cytoplasm"/>
    <property type="evidence" value="ECO:0007669"/>
    <property type="project" value="UniProtKB-SubCell"/>
</dbReference>
<dbReference type="GO" id="GO:0005524">
    <property type="term" value="F:ATP binding"/>
    <property type="evidence" value="ECO:0007669"/>
    <property type="project" value="UniProtKB-UniRule"/>
</dbReference>
<dbReference type="GO" id="GO:0004824">
    <property type="term" value="F:lysine-tRNA ligase activity"/>
    <property type="evidence" value="ECO:0007669"/>
    <property type="project" value="UniProtKB-UniRule"/>
</dbReference>
<dbReference type="GO" id="GO:0000049">
    <property type="term" value="F:tRNA binding"/>
    <property type="evidence" value="ECO:0007669"/>
    <property type="project" value="InterPro"/>
</dbReference>
<dbReference type="GO" id="GO:0006430">
    <property type="term" value="P:lysyl-tRNA aminoacylation"/>
    <property type="evidence" value="ECO:0007669"/>
    <property type="project" value="UniProtKB-UniRule"/>
</dbReference>
<dbReference type="Gene3D" id="1.10.10.350">
    <property type="match status" value="1"/>
</dbReference>
<dbReference type="Gene3D" id="3.40.50.620">
    <property type="entry name" value="HUPs"/>
    <property type="match status" value="2"/>
</dbReference>
<dbReference type="HAMAP" id="MF_00177">
    <property type="entry name" value="Lys_tRNA_synth_class1"/>
    <property type="match status" value="1"/>
</dbReference>
<dbReference type="InterPro" id="IPR020751">
    <property type="entry name" value="aa-tRNA-synth_I_codon-bd_sub2"/>
</dbReference>
<dbReference type="InterPro" id="IPR001412">
    <property type="entry name" value="aa-tRNA-synth_I_CS"/>
</dbReference>
<dbReference type="InterPro" id="IPR008925">
    <property type="entry name" value="aa_tRNA-synth_I_cd-bd_sf"/>
</dbReference>
<dbReference type="InterPro" id="IPR002904">
    <property type="entry name" value="Lys-tRNA-ligase"/>
</dbReference>
<dbReference type="InterPro" id="IPR014729">
    <property type="entry name" value="Rossmann-like_a/b/a_fold"/>
</dbReference>
<dbReference type="NCBIfam" id="TIGR00467">
    <property type="entry name" value="lysS_arch"/>
    <property type="match status" value="1"/>
</dbReference>
<dbReference type="NCBIfam" id="NF001968">
    <property type="entry name" value="PRK00750.1-2"/>
    <property type="match status" value="1"/>
</dbReference>
<dbReference type="PANTHER" id="PTHR37940">
    <property type="entry name" value="LYSINE--TRNA LIGASE"/>
    <property type="match status" value="1"/>
</dbReference>
<dbReference type="PANTHER" id="PTHR37940:SF1">
    <property type="entry name" value="LYSINE--TRNA LIGASE"/>
    <property type="match status" value="1"/>
</dbReference>
<dbReference type="Pfam" id="PF01921">
    <property type="entry name" value="tRNA-synt_1f"/>
    <property type="match status" value="1"/>
</dbReference>
<dbReference type="SUPFAM" id="SSF48163">
    <property type="entry name" value="An anticodon-binding domain of class I aminoacyl-tRNA synthetases"/>
    <property type="match status" value="1"/>
</dbReference>
<dbReference type="SUPFAM" id="SSF52374">
    <property type="entry name" value="Nucleotidylyl transferase"/>
    <property type="match status" value="1"/>
</dbReference>
<dbReference type="PROSITE" id="PS00178">
    <property type="entry name" value="AA_TRNA_LIGASE_I"/>
    <property type="match status" value="1"/>
</dbReference>
<sequence length="522" mass="59891">MSEIWEDAIKSNAWPFVEAKKILDSLNGQIPEKGYVLFETGYGPSGLPHIGTFGENARMVMVQKAFEQLSDIPTKLICFSDDMDGLRKVPSNIPNPEMVAQYMDMPLTSIPDTFGECESYGHYMNAKLRSFLDKFGFEYEFYSSTNCYKAGMFDEMLIMVLEKYDEIMELMLPTFREERKATYSPFMPICPKTGKVLQVPIEKWDAKAGTVTYKDKAGNYIEVPVTGGHCKLQWKPDFGMRWAALKVDYEMYGKDHLANARLYSEICRILGGKPPVQLCYELFLDENGEKISKSKGNSISIDDWLKYAPVESMALFMYQNPTRAKRLFFDVIPKNVDEYITFNQKYHLEEDRAKRVANPVYHIHHGNVPKIETFGITYSLLLNLTSVCNPSDKSVLWGFISKYEPQATPNTNPYLDHLAEFAIRYYNDFIKAHKSYLSPSEKHKVILQDILDMLSDIADQTEAEAIQKAIYDIGMKAGYANLRDYFKDLYQILLGQNEGPRLGTFIKLYGVQEMKKLVEGQL</sequence>